<feature type="chain" id="PRO_0000340346" description="DNA ligase">
    <location>
        <begin position="1"/>
        <end position="741"/>
    </location>
</feature>
<feature type="domain" description="BRCT" evidence="1">
    <location>
        <begin position="662"/>
        <end position="741"/>
    </location>
</feature>
<feature type="active site" description="N6-AMP-lysine intermediate" evidence="1">
    <location>
        <position position="163"/>
    </location>
</feature>
<feature type="binding site" evidence="1">
    <location>
        <begin position="78"/>
        <end position="82"/>
    </location>
    <ligand>
        <name>NAD(+)</name>
        <dbReference type="ChEBI" id="CHEBI:57540"/>
    </ligand>
</feature>
<feature type="binding site" evidence="1">
    <location>
        <begin position="127"/>
        <end position="128"/>
    </location>
    <ligand>
        <name>NAD(+)</name>
        <dbReference type="ChEBI" id="CHEBI:57540"/>
    </ligand>
</feature>
<feature type="binding site" evidence="1">
    <location>
        <position position="161"/>
    </location>
    <ligand>
        <name>NAD(+)</name>
        <dbReference type="ChEBI" id="CHEBI:57540"/>
    </ligand>
</feature>
<feature type="binding site" evidence="1">
    <location>
        <position position="184"/>
    </location>
    <ligand>
        <name>NAD(+)</name>
        <dbReference type="ChEBI" id="CHEBI:57540"/>
    </ligand>
</feature>
<feature type="binding site" evidence="1">
    <location>
        <position position="219"/>
    </location>
    <ligand>
        <name>NAD(+)</name>
        <dbReference type="ChEBI" id="CHEBI:57540"/>
    </ligand>
</feature>
<feature type="binding site" evidence="1">
    <location>
        <position position="335"/>
    </location>
    <ligand>
        <name>NAD(+)</name>
        <dbReference type="ChEBI" id="CHEBI:57540"/>
    </ligand>
</feature>
<feature type="binding site" evidence="1">
    <location>
        <position position="359"/>
    </location>
    <ligand>
        <name>NAD(+)</name>
        <dbReference type="ChEBI" id="CHEBI:57540"/>
    </ligand>
</feature>
<feature type="binding site" evidence="1">
    <location>
        <position position="464"/>
    </location>
    <ligand>
        <name>Zn(2+)</name>
        <dbReference type="ChEBI" id="CHEBI:29105"/>
    </ligand>
</feature>
<feature type="binding site" evidence="1">
    <location>
        <position position="467"/>
    </location>
    <ligand>
        <name>Zn(2+)</name>
        <dbReference type="ChEBI" id="CHEBI:29105"/>
    </ligand>
</feature>
<feature type="binding site" evidence="1">
    <location>
        <position position="482"/>
    </location>
    <ligand>
        <name>Zn(2+)</name>
        <dbReference type="ChEBI" id="CHEBI:29105"/>
    </ligand>
</feature>
<feature type="binding site" evidence="1">
    <location>
        <position position="488"/>
    </location>
    <ligand>
        <name>Zn(2+)</name>
        <dbReference type="ChEBI" id="CHEBI:29105"/>
    </ligand>
</feature>
<accession>A8LK52</accession>
<sequence length="741" mass="79936">MSKDGPFRFGARGLWTSGQALLFLDPLGVWMGTPMNDTYVAVEALSEAAARKELARLSELLARANAEYHRDDAPSLSDADYDALKQRNAAIEARFPDLKRGDSPSDQVGAAPSDTFSKVTHAVRMLSLANAFSDEDIRDFDTRIRRFLGLAEDAPLAYTAEPKIDGLSLSLRYEHGTLVQAATRGDGAVGENVTANARTIDDIPHRLDGAPEVLEVRGEVYMSHADFAELNARQAETGGKTFANPRNAAAGSLRQLDAEITRARPLKFFAYAWGEISAPLAETQTETLARFREFGFTINPLTVRCETPEDMLAQYRAIEAQRATLGYDIDGVVYKLDDLDLQRRLGFRSTTPRWAIAHKFPAELAWTRLEAIDIQVGRTGALSPVARLAPVTVGGVVVSNATLHNEDYIQGRDNTGAPIRWGTDIRVGDWVQVYRAGDVIPKIRDVDLSRRPEGAAPFDFPTTCPECGSDAPREPGDAVRRCSGGLICPAQAVEKLKHFVSRGALDIDGLGAKQVEQFYRDGWIAEPADIFTLRARFGQGLQQLKNREGWGDKSAENLFRAIDTARTAPFAKVLFGLGIRHIGESASSLLANHYLTMEALLAAVDAAVDETSDAWADLLNIDGVGEVMARALVTTLTQEAERASVNRLLAQIDPAPATPPQVGDSPVAGKTLVFTGTLETMSRAEAKATAEALGAKVAGSVSAKTDLLIAGPGAGSKATKAEALGIEVIDEDAWRVLAGLA</sequence>
<reference key="1">
    <citation type="journal article" date="2010" name="ISME J.">
        <title>The complete genome sequence of the algal symbiont Dinoroseobacter shibae: a hitchhiker's guide to life in the sea.</title>
        <authorList>
            <person name="Wagner-Dobler I."/>
            <person name="Ballhausen B."/>
            <person name="Berger M."/>
            <person name="Brinkhoff T."/>
            <person name="Buchholz I."/>
            <person name="Bunk B."/>
            <person name="Cypionka H."/>
            <person name="Daniel R."/>
            <person name="Drepper T."/>
            <person name="Gerdts G."/>
            <person name="Hahnke S."/>
            <person name="Han C."/>
            <person name="Jahn D."/>
            <person name="Kalhoefer D."/>
            <person name="Kiss H."/>
            <person name="Klenk H.P."/>
            <person name="Kyrpides N."/>
            <person name="Liebl W."/>
            <person name="Liesegang H."/>
            <person name="Meincke L."/>
            <person name="Pati A."/>
            <person name="Petersen J."/>
            <person name="Piekarski T."/>
            <person name="Pommerenke C."/>
            <person name="Pradella S."/>
            <person name="Pukall R."/>
            <person name="Rabus R."/>
            <person name="Stackebrandt E."/>
            <person name="Thole S."/>
            <person name="Thompson L."/>
            <person name="Tielen P."/>
            <person name="Tomasch J."/>
            <person name="von Jan M."/>
            <person name="Wanphrut N."/>
            <person name="Wichels A."/>
            <person name="Zech H."/>
            <person name="Simon M."/>
        </authorList>
    </citation>
    <scope>NUCLEOTIDE SEQUENCE [LARGE SCALE GENOMIC DNA]</scope>
    <source>
        <strain>DSM 16493 / NCIMB 14021 / DFL 12</strain>
    </source>
</reference>
<protein>
    <recommendedName>
        <fullName evidence="1">DNA ligase</fullName>
        <ecNumber evidence="1">6.5.1.2</ecNumber>
    </recommendedName>
    <alternativeName>
        <fullName evidence="1">Polydeoxyribonucleotide synthase [NAD(+)]</fullName>
    </alternativeName>
</protein>
<evidence type="ECO:0000255" key="1">
    <source>
        <dbReference type="HAMAP-Rule" id="MF_01588"/>
    </source>
</evidence>
<dbReference type="EC" id="6.5.1.2" evidence="1"/>
<dbReference type="EMBL" id="CP000830">
    <property type="protein sequence ID" value="ABV93251.1"/>
    <property type="molecule type" value="Genomic_DNA"/>
</dbReference>
<dbReference type="SMR" id="A8LK52"/>
<dbReference type="STRING" id="398580.Dshi_1509"/>
<dbReference type="KEGG" id="dsh:Dshi_1509"/>
<dbReference type="eggNOG" id="COG0272">
    <property type="taxonomic scope" value="Bacteria"/>
</dbReference>
<dbReference type="HOGENOM" id="CLU_007764_2_1_5"/>
<dbReference type="OrthoDB" id="9759736at2"/>
<dbReference type="Proteomes" id="UP000006833">
    <property type="component" value="Chromosome"/>
</dbReference>
<dbReference type="GO" id="GO:0005829">
    <property type="term" value="C:cytosol"/>
    <property type="evidence" value="ECO:0007669"/>
    <property type="project" value="TreeGrafter"/>
</dbReference>
<dbReference type="GO" id="GO:0003911">
    <property type="term" value="F:DNA ligase (NAD+) activity"/>
    <property type="evidence" value="ECO:0007669"/>
    <property type="project" value="UniProtKB-UniRule"/>
</dbReference>
<dbReference type="GO" id="GO:0046872">
    <property type="term" value="F:metal ion binding"/>
    <property type="evidence" value="ECO:0007669"/>
    <property type="project" value="UniProtKB-KW"/>
</dbReference>
<dbReference type="GO" id="GO:0006281">
    <property type="term" value="P:DNA repair"/>
    <property type="evidence" value="ECO:0007669"/>
    <property type="project" value="UniProtKB-KW"/>
</dbReference>
<dbReference type="GO" id="GO:0006260">
    <property type="term" value="P:DNA replication"/>
    <property type="evidence" value="ECO:0007669"/>
    <property type="project" value="UniProtKB-KW"/>
</dbReference>
<dbReference type="CDD" id="cd17748">
    <property type="entry name" value="BRCT_DNA_ligase_like"/>
    <property type="match status" value="1"/>
</dbReference>
<dbReference type="CDD" id="cd00114">
    <property type="entry name" value="LIGANc"/>
    <property type="match status" value="1"/>
</dbReference>
<dbReference type="FunFam" id="1.10.150.20:FF:000007">
    <property type="entry name" value="DNA ligase"/>
    <property type="match status" value="1"/>
</dbReference>
<dbReference type="FunFam" id="3.30.470.30:FF:000001">
    <property type="entry name" value="DNA ligase"/>
    <property type="match status" value="1"/>
</dbReference>
<dbReference type="Gene3D" id="6.20.10.30">
    <property type="match status" value="1"/>
</dbReference>
<dbReference type="Gene3D" id="1.10.150.20">
    <property type="entry name" value="5' to 3' exonuclease, C-terminal subdomain"/>
    <property type="match status" value="2"/>
</dbReference>
<dbReference type="Gene3D" id="3.40.50.10190">
    <property type="entry name" value="BRCT domain"/>
    <property type="match status" value="1"/>
</dbReference>
<dbReference type="Gene3D" id="3.30.470.30">
    <property type="entry name" value="DNA ligase/mRNA capping enzyme"/>
    <property type="match status" value="1"/>
</dbReference>
<dbReference type="Gene3D" id="1.10.287.610">
    <property type="entry name" value="Helix hairpin bin"/>
    <property type="match status" value="1"/>
</dbReference>
<dbReference type="Gene3D" id="2.40.50.140">
    <property type="entry name" value="Nucleic acid-binding proteins"/>
    <property type="match status" value="1"/>
</dbReference>
<dbReference type="HAMAP" id="MF_01588">
    <property type="entry name" value="DNA_ligase_A"/>
    <property type="match status" value="1"/>
</dbReference>
<dbReference type="InterPro" id="IPR001357">
    <property type="entry name" value="BRCT_dom"/>
</dbReference>
<dbReference type="InterPro" id="IPR036420">
    <property type="entry name" value="BRCT_dom_sf"/>
</dbReference>
<dbReference type="InterPro" id="IPR041663">
    <property type="entry name" value="DisA/LigA_HHH"/>
</dbReference>
<dbReference type="InterPro" id="IPR001679">
    <property type="entry name" value="DNA_ligase"/>
</dbReference>
<dbReference type="InterPro" id="IPR018239">
    <property type="entry name" value="DNA_ligase_AS"/>
</dbReference>
<dbReference type="InterPro" id="IPR033136">
    <property type="entry name" value="DNA_ligase_CS"/>
</dbReference>
<dbReference type="InterPro" id="IPR013839">
    <property type="entry name" value="DNAligase_adenylation"/>
</dbReference>
<dbReference type="InterPro" id="IPR013840">
    <property type="entry name" value="DNAligase_N"/>
</dbReference>
<dbReference type="InterPro" id="IPR012340">
    <property type="entry name" value="NA-bd_OB-fold"/>
</dbReference>
<dbReference type="InterPro" id="IPR004150">
    <property type="entry name" value="NAD_DNA_ligase_OB"/>
</dbReference>
<dbReference type="InterPro" id="IPR010994">
    <property type="entry name" value="RuvA_2-like"/>
</dbReference>
<dbReference type="InterPro" id="IPR004149">
    <property type="entry name" value="Znf_DNAligase_C4"/>
</dbReference>
<dbReference type="NCBIfam" id="TIGR00575">
    <property type="entry name" value="dnlj"/>
    <property type="match status" value="1"/>
</dbReference>
<dbReference type="NCBIfam" id="NF005932">
    <property type="entry name" value="PRK07956.1"/>
    <property type="match status" value="1"/>
</dbReference>
<dbReference type="PANTHER" id="PTHR23389">
    <property type="entry name" value="CHROMOSOME TRANSMISSION FIDELITY FACTOR 18"/>
    <property type="match status" value="1"/>
</dbReference>
<dbReference type="PANTHER" id="PTHR23389:SF9">
    <property type="entry name" value="DNA LIGASE"/>
    <property type="match status" value="1"/>
</dbReference>
<dbReference type="Pfam" id="PF00533">
    <property type="entry name" value="BRCT"/>
    <property type="match status" value="1"/>
</dbReference>
<dbReference type="Pfam" id="PF01653">
    <property type="entry name" value="DNA_ligase_aden"/>
    <property type="match status" value="1"/>
</dbReference>
<dbReference type="Pfam" id="PF03120">
    <property type="entry name" value="DNA_ligase_OB"/>
    <property type="match status" value="1"/>
</dbReference>
<dbReference type="Pfam" id="PF03119">
    <property type="entry name" value="DNA_ligase_ZBD"/>
    <property type="match status" value="1"/>
</dbReference>
<dbReference type="Pfam" id="PF12826">
    <property type="entry name" value="HHH_2"/>
    <property type="match status" value="1"/>
</dbReference>
<dbReference type="PIRSF" id="PIRSF001604">
    <property type="entry name" value="LigA"/>
    <property type="match status" value="1"/>
</dbReference>
<dbReference type="SMART" id="SM00292">
    <property type="entry name" value="BRCT"/>
    <property type="match status" value="1"/>
</dbReference>
<dbReference type="SMART" id="SM00532">
    <property type="entry name" value="LIGANc"/>
    <property type="match status" value="1"/>
</dbReference>
<dbReference type="SUPFAM" id="SSF52113">
    <property type="entry name" value="BRCT domain"/>
    <property type="match status" value="1"/>
</dbReference>
<dbReference type="SUPFAM" id="SSF56091">
    <property type="entry name" value="DNA ligase/mRNA capping enzyme, catalytic domain"/>
    <property type="match status" value="1"/>
</dbReference>
<dbReference type="SUPFAM" id="SSF50249">
    <property type="entry name" value="Nucleic acid-binding proteins"/>
    <property type="match status" value="1"/>
</dbReference>
<dbReference type="SUPFAM" id="SSF47781">
    <property type="entry name" value="RuvA domain 2-like"/>
    <property type="match status" value="1"/>
</dbReference>
<dbReference type="PROSITE" id="PS50172">
    <property type="entry name" value="BRCT"/>
    <property type="match status" value="1"/>
</dbReference>
<dbReference type="PROSITE" id="PS01055">
    <property type="entry name" value="DNA_LIGASE_N1"/>
    <property type="match status" value="1"/>
</dbReference>
<dbReference type="PROSITE" id="PS01056">
    <property type="entry name" value="DNA_LIGASE_N2"/>
    <property type="match status" value="1"/>
</dbReference>
<organism>
    <name type="scientific">Dinoroseobacter shibae (strain DSM 16493 / NCIMB 14021 / DFL 12)</name>
    <dbReference type="NCBI Taxonomy" id="398580"/>
    <lineage>
        <taxon>Bacteria</taxon>
        <taxon>Pseudomonadati</taxon>
        <taxon>Pseudomonadota</taxon>
        <taxon>Alphaproteobacteria</taxon>
        <taxon>Rhodobacterales</taxon>
        <taxon>Roseobacteraceae</taxon>
        <taxon>Dinoroseobacter</taxon>
    </lineage>
</organism>
<gene>
    <name evidence="1" type="primary">ligA</name>
    <name type="ordered locus">Dshi_1509</name>
</gene>
<keyword id="KW-0227">DNA damage</keyword>
<keyword id="KW-0234">DNA repair</keyword>
<keyword id="KW-0235">DNA replication</keyword>
<keyword id="KW-0436">Ligase</keyword>
<keyword id="KW-0460">Magnesium</keyword>
<keyword id="KW-0464">Manganese</keyword>
<keyword id="KW-0479">Metal-binding</keyword>
<keyword id="KW-0520">NAD</keyword>
<keyword id="KW-1185">Reference proteome</keyword>
<keyword id="KW-0862">Zinc</keyword>
<proteinExistence type="inferred from homology"/>
<comment type="function">
    <text evidence="1">DNA ligase that catalyzes the formation of phosphodiester linkages between 5'-phosphoryl and 3'-hydroxyl groups in double-stranded DNA using NAD as a coenzyme and as the energy source for the reaction. It is essential for DNA replication and repair of damaged DNA.</text>
</comment>
<comment type="catalytic activity">
    <reaction evidence="1">
        <text>NAD(+) + (deoxyribonucleotide)n-3'-hydroxyl + 5'-phospho-(deoxyribonucleotide)m = (deoxyribonucleotide)n+m + AMP + beta-nicotinamide D-nucleotide.</text>
        <dbReference type="EC" id="6.5.1.2"/>
    </reaction>
</comment>
<comment type="cofactor">
    <cofactor evidence="1">
        <name>Mg(2+)</name>
        <dbReference type="ChEBI" id="CHEBI:18420"/>
    </cofactor>
    <cofactor evidence="1">
        <name>Mn(2+)</name>
        <dbReference type="ChEBI" id="CHEBI:29035"/>
    </cofactor>
</comment>
<comment type="similarity">
    <text evidence="1">Belongs to the NAD-dependent DNA ligase family. LigA subfamily.</text>
</comment>
<name>DNLJ_DINSH</name>